<gene>
    <name type="ordered locus">Reut_A2428</name>
</gene>
<accession>Q46YJ3</accession>
<protein>
    <recommendedName>
        <fullName evidence="1">Adenine deaminase</fullName>
        <shortName evidence="1">ADE</shortName>
        <ecNumber evidence="1">3.5.4.2</ecNumber>
    </recommendedName>
    <alternativeName>
        <fullName evidence="1">Adenine aminohydrolase</fullName>
        <shortName evidence="1">AAH</shortName>
    </alternativeName>
</protein>
<comment type="function">
    <text evidence="1">Catalyzes the hydrolytic deamination of adenine to hypoxanthine. Plays an important role in the purine salvage pathway and in nitrogen catabolism.</text>
</comment>
<comment type="catalytic activity">
    <reaction evidence="1">
        <text>adenine + H2O + H(+) = hypoxanthine + NH4(+)</text>
        <dbReference type="Rhea" id="RHEA:23688"/>
        <dbReference type="ChEBI" id="CHEBI:15377"/>
        <dbReference type="ChEBI" id="CHEBI:15378"/>
        <dbReference type="ChEBI" id="CHEBI:16708"/>
        <dbReference type="ChEBI" id="CHEBI:17368"/>
        <dbReference type="ChEBI" id="CHEBI:28938"/>
        <dbReference type="EC" id="3.5.4.2"/>
    </reaction>
</comment>
<comment type="cofactor">
    <cofactor evidence="1">
        <name>Zn(2+)</name>
        <dbReference type="ChEBI" id="CHEBI:29105"/>
    </cofactor>
    <text evidence="1">Binds 1 zinc ion per subunit.</text>
</comment>
<comment type="similarity">
    <text evidence="1">Belongs to the metallo-dependent hydrolases superfamily. Adenosine and AMP deaminases family. Adenine deaminase type 2 subfamily.</text>
</comment>
<organism>
    <name type="scientific">Cupriavidus pinatubonensis (strain JMP 134 / LMG 1197)</name>
    <name type="common">Cupriavidus necator (strain JMP 134)</name>
    <dbReference type="NCBI Taxonomy" id="264198"/>
    <lineage>
        <taxon>Bacteria</taxon>
        <taxon>Pseudomonadati</taxon>
        <taxon>Pseudomonadota</taxon>
        <taxon>Betaproteobacteria</taxon>
        <taxon>Burkholderiales</taxon>
        <taxon>Burkholderiaceae</taxon>
        <taxon>Cupriavidus</taxon>
    </lineage>
</organism>
<proteinExistence type="inferred from homology"/>
<feature type="chain" id="PRO_1000017688" description="Adenine deaminase">
    <location>
        <begin position="1"/>
        <end position="351"/>
    </location>
</feature>
<feature type="active site" description="Proton donor" evidence="1">
    <location>
        <position position="203"/>
    </location>
</feature>
<feature type="binding site" evidence="1">
    <location>
        <position position="20"/>
    </location>
    <ligand>
        <name>Zn(2+)</name>
        <dbReference type="ChEBI" id="CHEBI:29105"/>
        <note>catalytic</note>
    </ligand>
</feature>
<feature type="binding site" evidence="1">
    <location>
        <position position="22"/>
    </location>
    <ligand>
        <name>Zn(2+)</name>
        <dbReference type="ChEBI" id="CHEBI:29105"/>
        <note>catalytic</note>
    </ligand>
</feature>
<feature type="binding site" evidence="1">
    <location>
        <position position="200"/>
    </location>
    <ligand>
        <name>Zn(2+)</name>
        <dbReference type="ChEBI" id="CHEBI:29105"/>
        <note>catalytic</note>
    </ligand>
</feature>
<feature type="binding site" evidence="1">
    <location>
        <position position="281"/>
    </location>
    <ligand>
        <name>Zn(2+)</name>
        <dbReference type="ChEBI" id="CHEBI:29105"/>
        <note>catalytic</note>
    </ligand>
</feature>
<feature type="binding site" evidence="1">
    <location>
        <position position="282"/>
    </location>
    <ligand>
        <name>substrate</name>
    </ligand>
</feature>
<feature type="site" description="Important for catalytic activity" evidence="1">
    <location>
        <position position="224"/>
    </location>
</feature>
<sequence>MTIDAALADKIRRTPKAELHVHIEGTLEPELIFRLAQRNHVNLPYPSVEALRAAYAFTDLQSFLDIYYAGASVLLTEEDFFDMTMDYVKRAVADNVRHAEIFFDPQTHTARGVPIGTVIDGISDALAQARTEYDFSSSLILCFLRHLSEEDAFATLEAALPYRDRFVGVGLDSSEKGNPPEKFARVFTRARELGLHLVAHAGEEGPAQYVTDALDILKVERIDHGVRSIDDAALIERLARERVALTVCPLSNQKLKVHPDLSEHPLKRMLDAGVAITLHSDDPAYFGGYMNANWEATFAALPLDAADAHKLARNSFEAAFLPPMQKAEFLAEVDHFWSATPTSPPATAPAA</sequence>
<dbReference type="EC" id="3.5.4.2" evidence="1"/>
<dbReference type="EMBL" id="CP000090">
    <property type="protein sequence ID" value="AAZ61790.1"/>
    <property type="molecule type" value="Genomic_DNA"/>
</dbReference>
<dbReference type="SMR" id="Q46YJ3"/>
<dbReference type="STRING" id="264198.Reut_A2428"/>
<dbReference type="KEGG" id="reu:Reut_A2428"/>
<dbReference type="eggNOG" id="COG1816">
    <property type="taxonomic scope" value="Bacteria"/>
</dbReference>
<dbReference type="HOGENOM" id="CLU_039228_7_0_4"/>
<dbReference type="OrthoDB" id="105475at2"/>
<dbReference type="GO" id="GO:0005829">
    <property type="term" value="C:cytosol"/>
    <property type="evidence" value="ECO:0007669"/>
    <property type="project" value="TreeGrafter"/>
</dbReference>
<dbReference type="GO" id="GO:0000034">
    <property type="term" value="F:adenine deaminase activity"/>
    <property type="evidence" value="ECO:0007669"/>
    <property type="project" value="UniProtKB-UniRule"/>
</dbReference>
<dbReference type="GO" id="GO:0008270">
    <property type="term" value="F:zinc ion binding"/>
    <property type="evidence" value="ECO:0007669"/>
    <property type="project" value="UniProtKB-UniRule"/>
</dbReference>
<dbReference type="GO" id="GO:0006146">
    <property type="term" value="P:adenine catabolic process"/>
    <property type="evidence" value="ECO:0007669"/>
    <property type="project" value="UniProtKB-UniRule"/>
</dbReference>
<dbReference type="GO" id="GO:0043103">
    <property type="term" value="P:hypoxanthine salvage"/>
    <property type="evidence" value="ECO:0007669"/>
    <property type="project" value="UniProtKB-UniRule"/>
</dbReference>
<dbReference type="GO" id="GO:0009117">
    <property type="term" value="P:nucleotide metabolic process"/>
    <property type="evidence" value="ECO:0007669"/>
    <property type="project" value="UniProtKB-KW"/>
</dbReference>
<dbReference type="CDD" id="cd01320">
    <property type="entry name" value="ADA"/>
    <property type="match status" value="1"/>
</dbReference>
<dbReference type="FunFam" id="3.20.20.140:FF:000039">
    <property type="entry name" value="Adenine deaminase"/>
    <property type="match status" value="1"/>
</dbReference>
<dbReference type="Gene3D" id="3.20.20.140">
    <property type="entry name" value="Metal-dependent hydrolases"/>
    <property type="match status" value="1"/>
</dbReference>
<dbReference type="HAMAP" id="MF_01962">
    <property type="entry name" value="Adenine_deaminase"/>
    <property type="match status" value="1"/>
</dbReference>
<dbReference type="InterPro" id="IPR001365">
    <property type="entry name" value="A_deaminase_dom"/>
</dbReference>
<dbReference type="InterPro" id="IPR028892">
    <property type="entry name" value="ADE"/>
</dbReference>
<dbReference type="InterPro" id="IPR006330">
    <property type="entry name" value="Ado/ade_deaminase"/>
</dbReference>
<dbReference type="InterPro" id="IPR032466">
    <property type="entry name" value="Metal_Hydrolase"/>
</dbReference>
<dbReference type="NCBIfam" id="TIGR01430">
    <property type="entry name" value="aden_deam"/>
    <property type="match status" value="1"/>
</dbReference>
<dbReference type="NCBIfam" id="NF006850">
    <property type="entry name" value="PRK09358.1-6"/>
    <property type="match status" value="1"/>
</dbReference>
<dbReference type="PANTHER" id="PTHR43114">
    <property type="entry name" value="ADENINE DEAMINASE"/>
    <property type="match status" value="1"/>
</dbReference>
<dbReference type="PANTHER" id="PTHR43114:SF6">
    <property type="entry name" value="ADENINE DEAMINASE"/>
    <property type="match status" value="1"/>
</dbReference>
<dbReference type="Pfam" id="PF00962">
    <property type="entry name" value="A_deaminase"/>
    <property type="match status" value="1"/>
</dbReference>
<dbReference type="SUPFAM" id="SSF51556">
    <property type="entry name" value="Metallo-dependent hydrolases"/>
    <property type="match status" value="1"/>
</dbReference>
<name>ADE_CUPPJ</name>
<keyword id="KW-0378">Hydrolase</keyword>
<keyword id="KW-0479">Metal-binding</keyword>
<keyword id="KW-0546">Nucleotide metabolism</keyword>
<keyword id="KW-0862">Zinc</keyword>
<reference key="1">
    <citation type="journal article" date="2010" name="PLoS ONE">
        <title>The complete multipartite genome sequence of Cupriavidus necator JMP134, a versatile pollutant degrader.</title>
        <authorList>
            <person name="Lykidis A."/>
            <person name="Perez-Pantoja D."/>
            <person name="Ledger T."/>
            <person name="Mavromatis K."/>
            <person name="Anderson I.J."/>
            <person name="Ivanova N.N."/>
            <person name="Hooper S.D."/>
            <person name="Lapidus A."/>
            <person name="Lucas S."/>
            <person name="Gonzalez B."/>
            <person name="Kyrpides N.C."/>
        </authorList>
    </citation>
    <scope>NUCLEOTIDE SEQUENCE [LARGE SCALE GENOMIC DNA]</scope>
    <source>
        <strain>JMP134 / LMG 1197</strain>
    </source>
</reference>
<evidence type="ECO:0000255" key="1">
    <source>
        <dbReference type="HAMAP-Rule" id="MF_01962"/>
    </source>
</evidence>